<proteinExistence type="evidence at transcript level"/>
<sequence>MSPAPAILALRRVYNFCLLVDEAHGFMALGKSGRGSFEWWQDCGYDCPLQEVDIMTGTMSKSLCCIGGFVSANGVYAAELERQRTLQHQNGAETLSTAVLVRILSLINKPKLIKERMTALGRKASFVADCLAQAGCDILSSYGSPVVCFPVGTIQQASRFHEEAMERGFAVACGVPPATPLWSCRVRVCIFATTSWEDILDLINMIIKVSCKLQLKGITATVFTPDTLPKQYLDDPSIAEQSIKSDASICSYVESLSKTYPGGDLEAKAPLNLAQSQEAVEASVKAFSKYGLGPSSARWFYGTFDVFIALERRLAKLYPSLQRHSGRCRAMLGTDAHTMMLSLLSACANPYTSGVMNILLIPTTASLAVQDGADLNRPRAETKIIYYEKLDNLVAKLRELPIDASKLHLTLYLQTTSHDGSSILDLPATVQMINSGMNDPNQLKGLKLILDDSGGLGKVGPHHLGYLDLMERDHGVSFLNQSLGIKLAPKTEIIVTGSFFNAFGQQGGYIISSASFIEVHTVSSKSFVFSTPPTPIQAALSGKVLEILSRGTC</sequence>
<evidence type="ECO:0000255" key="1"/>
<evidence type="ECO:0000255" key="2">
    <source>
        <dbReference type="HAMAP-Rule" id="MF_01693"/>
    </source>
</evidence>
<evidence type="ECO:0000255" key="3">
    <source>
        <dbReference type="PROSITE-ProRule" id="PRU00498"/>
    </source>
</evidence>
<evidence type="ECO:0000269" key="4">
    <source>
    </source>
</evidence>
<evidence type="ECO:0000269" key="5">
    <source>
    </source>
</evidence>
<evidence type="ECO:0000269" key="6">
    <source>
    </source>
</evidence>
<evidence type="ECO:0000269" key="7">
    <source>
    </source>
</evidence>
<evidence type="ECO:0000269" key="8">
    <source>
    </source>
</evidence>
<evidence type="ECO:0000303" key="9">
    <source>
    </source>
</evidence>
<evidence type="ECO:0000303" key="10">
    <source>
    </source>
</evidence>
<evidence type="ECO:0000305" key="11"/>
<evidence type="ECO:0000305" key="12">
    <source>
    </source>
</evidence>
<evidence type="ECO:0000305" key="13">
    <source>
    </source>
</evidence>
<organism>
    <name type="scientific">Gibberella moniliformis (strain M3125 / FGSC 7600)</name>
    <name type="common">Maize ear and stalk rot fungus</name>
    <name type="synonym">Fusarium verticillioides</name>
    <dbReference type="NCBI Taxonomy" id="334819"/>
    <lineage>
        <taxon>Eukaryota</taxon>
        <taxon>Fungi</taxon>
        <taxon>Dikarya</taxon>
        <taxon>Ascomycota</taxon>
        <taxon>Pezizomycotina</taxon>
        <taxon>Sordariomycetes</taxon>
        <taxon>Hypocreomycetidae</taxon>
        <taxon>Hypocreales</taxon>
        <taxon>Nectriaceae</taxon>
        <taxon>Fusarium</taxon>
        <taxon>Fusarium fujikuroi species complex</taxon>
    </lineage>
</organism>
<keyword id="KW-0256">Endoplasmic reticulum</keyword>
<keyword id="KW-0325">Glycoprotein</keyword>
<keyword id="KW-1185">Reference proteome</keyword>
<keyword id="KW-0732">Signal</keyword>
<keyword id="KW-0808">Transferase</keyword>
<dbReference type="EC" id="2.3.1.-" evidence="12"/>
<dbReference type="EMBL" id="AF155773">
    <property type="protein sequence ID" value="AAG27130.3"/>
    <property type="status" value="ALT_INIT"/>
    <property type="molecule type" value="Genomic_DNA"/>
</dbReference>
<dbReference type="EMBL" id="HQ404726">
    <property type="protein sequence ID" value="ADQ38989.1"/>
    <property type="status" value="ALT_INIT"/>
    <property type="molecule type" value="Genomic_DNA"/>
</dbReference>
<dbReference type="EMBL" id="HQ404731">
    <property type="protein sequence ID" value="ADQ38994.1"/>
    <property type="status" value="ALT_INIT"/>
    <property type="molecule type" value="Genomic_DNA"/>
</dbReference>
<dbReference type="EMBL" id="HQ404732">
    <property type="protein sequence ID" value="ADQ38995.1"/>
    <property type="status" value="ALT_INIT"/>
    <property type="molecule type" value="Genomic_DNA"/>
</dbReference>
<dbReference type="EMBL" id="HQ404733">
    <property type="protein sequence ID" value="ADQ38996.1"/>
    <property type="status" value="ALT_INIT"/>
    <property type="molecule type" value="Genomic_DNA"/>
</dbReference>
<dbReference type="EMBL" id="HQ404735">
    <property type="protein sequence ID" value="ADQ38998.1"/>
    <property type="status" value="ALT_INIT"/>
    <property type="molecule type" value="Genomic_DNA"/>
</dbReference>
<dbReference type="EMBL" id="HQ404737">
    <property type="protein sequence ID" value="ADQ39000.1"/>
    <property type="status" value="ALT_INIT"/>
    <property type="molecule type" value="Genomic_DNA"/>
</dbReference>
<dbReference type="EMBL" id="HQ404738">
    <property type="protein sequence ID" value="ADQ39001.1"/>
    <property type="status" value="ALT_INIT"/>
    <property type="molecule type" value="Genomic_DNA"/>
</dbReference>
<dbReference type="EMBL" id="HQ404740">
    <property type="protein sequence ID" value="ADQ39003.1"/>
    <property type="status" value="ALT_INIT"/>
    <property type="molecule type" value="Genomic_DNA"/>
</dbReference>
<dbReference type="EMBL" id="HQ404742">
    <property type="protein sequence ID" value="ADQ39005.1"/>
    <property type="status" value="ALT_INIT"/>
    <property type="molecule type" value="Genomic_DNA"/>
</dbReference>
<dbReference type="EMBL" id="HQ404744">
    <property type="protein sequence ID" value="ADQ39007.1"/>
    <property type="status" value="ALT_INIT"/>
    <property type="molecule type" value="Genomic_DNA"/>
</dbReference>
<dbReference type="EMBL" id="HQ404746">
    <property type="protein sequence ID" value="ADQ39009.1"/>
    <property type="status" value="ALT_INIT"/>
    <property type="molecule type" value="Genomic_DNA"/>
</dbReference>
<dbReference type="EMBL" id="HQ404747">
    <property type="protein sequence ID" value="ADQ39010.1"/>
    <property type="status" value="ALT_INIT"/>
    <property type="molecule type" value="Genomic_DNA"/>
</dbReference>
<dbReference type="EMBL" id="HQ404748">
    <property type="protein sequence ID" value="ADQ39011.1"/>
    <property type="status" value="ALT_INIT"/>
    <property type="molecule type" value="Genomic_DNA"/>
</dbReference>
<dbReference type="EMBL" id="CM000578">
    <property type="protein sequence ID" value="EWG36198.1"/>
    <property type="molecule type" value="Genomic_DNA"/>
</dbReference>
<dbReference type="RefSeq" id="XP_018742389.1">
    <property type="nucleotide sequence ID" value="XM_018903581.1"/>
</dbReference>
<dbReference type="SMR" id="W7L9E0"/>
<dbReference type="STRING" id="334819.W7L9E0"/>
<dbReference type="GlyCosmos" id="W7L9E0">
    <property type="glycosylation" value="1 site, No reported glycans"/>
</dbReference>
<dbReference type="GeneID" id="30071510"/>
<dbReference type="KEGG" id="fvr:FVEG_14634"/>
<dbReference type="VEuPathDB" id="FungiDB:FVEG_14634"/>
<dbReference type="eggNOG" id="KOG1357">
    <property type="taxonomic scope" value="Eukaryota"/>
</dbReference>
<dbReference type="eggNOG" id="KOG1358">
    <property type="taxonomic scope" value="Eukaryota"/>
</dbReference>
<dbReference type="OrthoDB" id="35518at110618"/>
<dbReference type="Proteomes" id="UP000009096">
    <property type="component" value="Chromosome 1"/>
</dbReference>
<dbReference type="GO" id="GO:0005783">
    <property type="term" value="C:endoplasmic reticulum"/>
    <property type="evidence" value="ECO:0007669"/>
    <property type="project" value="TreeGrafter"/>
</dbReference>
<dbReference type="GO" id="GO:0016020">
    <property type="term" value="C:membrane"/>
    <property type="evidence" value="ECO:0007669"/>
    <property type="project" value="GOC"/>
</dbReference>
<dbReference type="GO" id="GO:0030170">
    <property type="term" value="F:pyridoxal phosphate binding"/>
    <property type="evidence" value="ECO:0007669"/>
    <property type="project" value="InterPro"/>
</dbReference>
<dbReference type="GO" id="GO:0004758">
    <property type="term" value="F:serine C-palmitoyltransferase activity"/>
    <property type="evidence" value="ECO:0007669"/>
    <property type="project" value="TreeGrafter"/>
</dbReference>
<dbReference type="GO" id="GO:0046513">
    <property type="term" value="P:ceramide biosynthetic process"/>
    <property type="evidence" value="ECO:0007669"/>
    <property type="project" value="TreeGrafter"/>
</dbReference>
<dbReference type="GO" id="GO:1900541">
    <property type="term" value="P:fumonisin biosynthetic process"/>
    <property type="evidence" value="ECO:0000315"/>
    <property type="project" value="GO_Central"/>
</dbReference>
<dbReference type="GO" id="GO:0046512">
    <property type="term" value="P:sphingosine biosynthetic process"/>
    <property type="evidence" value="ECO:0007669"/>
    <property type="project" value="TreeGrafter"/>
</dbReference>
<dbReference type="Gene3D" id="3.90.1150.10">
    <property type="entry name" value="Aspartate Aminotransferase, domain 1"/>
    <property type="match status" value="1"/>
</dbReference>
<dbReference type="Gene3D" id="3.40.640.10">
    <property type="entry name" value="Type I PLP-dependent aspartate aminotransferase-like (Major domain)"/>
    <property type="match status" value="2"/>
</dbReference>
<dbReference type="InterPro" id="IPR004839">
    <property type="entry name" value="Aminotransferase_I/II_large"/>
</dbReference>
<dbReference type="InterPro" id="IPR050087">
    <property type="entry name" value="AON_synthase_class-II"/>
</dbReference>
<dbReference type="InterPro" id="IPR015424">
    <property type="entry name" value="PyrdxlP-dep_Trfase"/>
</dbReference>
<dbReference type="InterPro" id="IPR015421">
    <property type="entry name" value="PyrdxlP-dep_Trfase_major"/>
</dbReference>
<dbReference type="InterPro" id="IPR015422">
    <property type="entry name" value="PyrdxlP-dep_Trfase_small"/>
</dbReference>
<dbReference type="PANTHER" id="PTHR13693">
    <property type="entry name" value="CLASS II AMINOTRANSFERASE/8-AMINO-7-OXONONANOATE SYNTHASE"/>
    <property type="match status" value="1"/>
</dbReference>
<dbReference type="PANTHER" id="PTHR13693:SF2">
    <property type="entry name" value="SERINE PALMITOYLTRANSFERASE 1"/>
    <property type="match status" value="1"/>
</dbReference>
<dbReference type="Pfam" id="PF00155">
    <property type="entry name" value="Aminotran_1_2"/>
    <property type="match status" value="1"/>
</dbReference>
<dbReference type="SUPFAM" id="SSF53383">
    <property type="entry name" value="PLP-dependent transferases"/>
    <property type="match status" value="2"/>
</dbReference>
<feature type="signal peptide" evidence="1">
    <location>
        <begin position="1"/>
        <end position="25"/>
    </location>
</feature>
<feature type="chain" id="PRO_0000441147" description="Aminotransferase FUM8">
    <location>
        <begin position="26"/>
        <end position="553"/>
    </location>
</feature>
<feature type="glycosylation site" description="N-linked (GlcNAc...) asparagine" evidence="3">
    <location>
        <position position="480"/>
    </location>
</feature>
<comment type="function">
    <text evidence="4 5 6 8 13">Aminotransferase; part of the gene cluster that mediates the biosynthesis of fumonisins B1 (FB1), B2 (FB2), B3 (FB3), and B4 (FB4), which are carcinogenic mycotoxins (PubMed:11728154, PubMed:12620260, PubMed:15137825, PubMed:32546615). Within the pathway, FUM8 catalyzes the release of the C-18 polyketide chain from the highly reducing polyketide synthase FUM1 by a nucleophilic attack of a carbanion, which is derived from R-carbon of alanine by decarboxylation, on the carbonyl carbon of polyketide acyl chain (PubMed:15137825). The biosynthesis starts with the FUM1-catalyzed carbon chain assembly from one molecule of acetyl-CoA, eight molecules of malonyl-CoA, and two molecules of methionine (in S-adenosyl form). The C18 polyketide chain is released from the enzyme by a nucleophilic attack of a carbanion, which is derived from R-carbon of alanine by decarboxylation, on the carbonyl carbon of polyketide acyl chain. This step is catalyzed by the pyridoxal 5'-phosphate-dependent aminoacyl transferase FUM8. The resultant 3-keto intermediate is then stereospecifically reduced to a 3-hydroxyl product by reductase FUM13. Subsequent oxidations at C-10 by the cytochrome P450 monooxygenase FUM2, C-14 and C-15 by FUM6, FUM12 or FUM15, tricarballylic esterification of the hydroxyl groups on C-14 and C-15 by acyltransferase FUM14, and C-5 hydroxylation by 2-keto-glutarate-dependent dioxygenase FUM3 furnish the biosynthesis of fumonisins. The tricarballylic moieties are most likely derived from the citric acid cycle, and their addition to the carbon backbone may involve FUM7, FUM10, FUM11 and FUM14 (Probable).</text>
</comment>
<comment type="cofactor">
    <cofactor evidence="2">
        <name>pyridoxal 5'-phosphate</name>
        <dbReference type="ChEBI" id="CHEBI:597326"/>
    </cofactor>
</comment>
<comment type="pathway">
    <text evidence="4 6">Mycotoxin biosynthesis.</text>
</comment>
<comment type="subcellular location">
    <subcellularLocation>
        <location evidence="8">Endoplasmic reticulum</location>
    </subcellularLocation>
</comment>
<comment type="induction">
    <text evidence="4 7 8">Expression correlates with fumonisin production (PubMed:11728154, PubMed:32546615). Expression is positively regulated by the fumonisin gene cluster-specific transcription regulator FUM21 (PubMed:17483290).</text>
</comment>
<comment type="disruption phenotype">
    <text evidence="4 6">Impairs the production of fumonisins (PubMed:11728154, PubMed:15137825).</text>
</comment>
<comment type="similarity">
    <text evidence="11">Belongs to the class-II pyridoxal-phosphate-dependent aminotransferase family. BioF subfamily.</text>
</comment>
<comment type="sequence caution" evidence="11">
    <conflict type="erroneous initiation">
        <sequence resource="EMBL-CDS" id="AAG27130"/>
    </conflict>
    <text>Extended N-terminus.</text>
</comment>
<comment type="sequence caution" evidence="11">
    <conflict type="erroneous initiation">
        <sequence resource="EMBL-CDS" id="ADQ38989"/>
    </conflict>
    <text>Extended N-terminus.</text>
</comment>
<comment type="sequence caution" evidence="11">
    <conflict type="erroneous initiation">
        <sequence resource="EMBL-CDS" id="ADQ38994"/>
    </conflict>
    <text>Extended N-terminus.</text>
</comment>
<comment type="sequence caution" evidence="11">
    <conflict type="erroneous initiation">
        <sequence resource="EMBL-CDS" id="ADQ38995"/>
    </conflict>
    <text>Extended N-terminus.</text>
</comment>
<comment type="sequence caution" evidence="11">
    <conflict type="erroneous initiation">
        <sequence resource="EMBL-CDS" id="ADQ38996"/>
    </conflict>
    <text>Extended N-terminus.</text>
</comment>
<comment type="sequence caution" evidence="11">
    <conflict type="erroneous initiation">
        <sequence resource="EMBL-CDS" id="ADQ38998"/>
    </conflict>
    <text>Extended N-terminus.</text>
</comment>
<comment type="sequence caution" evidence="11">
    <conflict type="erroneous initiation">
        <sequence resource="EMBL-CDS" id="ADQ39000"/>
    </conflict>
    <text>Extended N-terminus.</text>
</comment>
<comment type="sequence caution" evidence="11">
    <conflict type="erroneous initiation">
        <sequence resource="EMBL-CDS" id="ADQ39001"/>
    </conflict>
    <text>Extended N-terminus.</text>
</comment>
<comment type="sequence caution" evidence="11">
    <conflict type="erroneous initiation">
        <sequence resource="EMBL-CDS" id="ADQ39003"/>
    </conflict>
    <text>Extended N-terminus.</text>
</comment>
<comment type="sequence caution" evidence="11">
    <conflict type="erroneous initiation">
        <sequence resource="EMBL-CDS" id="ADQ39005"/>
    </conflict>
    <text>Extended N-terminus.</text>
</comment>
<comment type="sequence caution" evidence="11">
    <conflict type="erroneous initiation">
        <sequence resource="EMBL-CDS" id="ADQ39007"/>
    </conflict>
    <text>Extended N-terminus.</text>
</comment>
<comment type="sequence caution" evidence="11">
    <conflict type="erroneous initiation">
        <sequence resource="EMBL-CDS" id="ADQ39009"/>
    </conflict>
    <text>Extended N-terminus.</text>
</comment>
<comment type="sequence caution" evidence="11">
    <conflict type="erroneous initiation">
        <sequence resource="EMBL-CDS" id="ADQ39010"/>
    </conflict>
    <text>Extended N-terminus.</text>
</comment>
<comment type="sequence caution" evidence="11">
    <conflict type="erroneous initiation">
        <sequence resource="EMBL-CDS" id="ADQ39011"/>
    </conflict>
    <text>Extended N-terminus.</text>
</comment>
<protein>
    <recommendedName>
        <fullName evidence="10">Aminotransferase FUM8</fullName>
        <ecNumber evidence="12">2.3.1.-</ecNumber>
    </recommendedName>
    <alternativeName>
        <fullName evidence="9">Fumonisin biosynthesis cluster protein 8</fullName>
    </alternativeName>
</protein>
<accession>W7L9E0</accession>
<accession>Q9HGD8</accession>
<reference key="1">
    <citation type="journal article" date="2001" name="Fungal Genet. Biol.">
        <title>Characterization of four clustered and coregulated genes associated with fumonisin biosynthesis in Fusarium verticillioides.</title>
        <authorList>
            <person name="Seo J.A."/>
            <person name="Proctor R.H."/>
            <person name="Plattner R.D."/>
        </authorList>
    </citation>
    <scope>NUCLEOTIDE SEQUENCE [GENOMIC DNA]</scope>
    <scope>INDUCTION</scope>
    <scope>DISRUPTION PHENOTYPE</scope>
    <scope>PATHWAY</scope>
    <source>
        <strain>M3125 / FGSC 7600</strain>
    </source>
</reference>
<reference key="2">
    <citation type="journal article" date="2003" name="Fungal Genet. Biol.">
        <title>Co-expression of 15 contiguous genes delineates a fumonisin biosynthetic gene cluster in Gibberella moniliformis.</title>
        <authorList>
            <person name="Proctor R.H."/>
            <person name="Brown D.W."/>
            <person name="Plattner R.D."/>
            <person name="Desjardins A.E."/>
        </authorList>
    </citation>
    <scope>NUCLEOTIDE SEQUENCE [GENOMIC DNA]</scope>
    <source>
        <strain>M3125 / FGSC 7600</strain>
    </source>
</reference>
<reference key="3">
    <citation type="journal article" date="2010" name="Nature">
        <title>Comparative genomics reveals mobile pathogenicity chromosomes in Fusarium.</title>
        <authorList>
            <person name="Ma L.-J."/>
            <person name="van der Does H.C."/>
            <person name="Borkovich K.A."/>
            <person name="Coleman J.J."/>
            <person name="Daboussi M.-J."/>
            <person name="Di Pietro A."/>
            <person name="Dufresne M."/>
            <person name="Freitag M."/>
            <person name="Grabherr M."/>
            <person name="Henrissat B."/>
            <person name="Houterman P.M."/>
            <person name="Kang S."/>
            <person name="Shim W.-B."/>
            <person name="Woloshuk C."/>
            <person name="Xie X."/>
            <person name="Xu J.-R."/>
            <person name="Antoniw J."/>
            <person name="Baker S.E."/>
            <person name="Bluhm B.H."/>
            <person name="Breakspear A."/>
            <person name="Brown D.W."/>
            <person name="Butchko R.A.E."/>
            <person name="Chapman S."/>
            <person name="Coulson R."/>
            <person name="Coutinho P.M."/>
            <person name="Danchin E.G.J."/>
            <person name="Diener A."/>
            <person name="Gale L.R."/>
            <person name="Gardiner D.M."/>
            <person name="Goff S."/>
            <person name="Hammond-Kosack K.E."/>
            <person name="Hilburn K."/>
            <person name="Hua-Van A."/>
            <person name="Jonkers W."/>
            <person name="Kazan K."/>
            <person name="Kodira C.D."/>
            <person name="Koehrsen M."/>
            <person name="Kumar L."/>
            <person name="Lee Y.-H."/>
            <person name="Li L."/>
            <person name="Manners J.M."/>
            <person name="Miranda-Saavedra D."/>
            <person name="Mukherjee M."/>
            <person name="Park G."/>
            <person name="Park J."/>
            <person name="Park S.-Y."/>
            <person name="Proctor R.H."/>
            <person name="Regev A."/>
            <person name="Ruiz-Roldan M.C."/>
            <person name="Sain D."/>
            <person name="Sakthikumar S."/>
            <person name="Sykes S."/>
            <person name="Schwartz D.C."/>
            <person name="Turgeon B.G."/>
            <person name="Wapinski I."/>
            <person name="Yoder O."/>
            <person name="Young S."/>
            <person name="Zeng Q."/>
            <person name="Zhou S."/>
            <person name="Galagan J."/>
            <person name="Cuomo C.A."/>
            <person name="Kistler H.C."/>
            <person name="Rep M."/>
        </authorList>
    </citation>
    <scope>NUCLEOTIDE SEQUENCE [LARGE SCALE GENOMIC DNA]</scope>
    <source>
        <strain>M3125 / FGSC 7600</strain>
    </source>
</reference>
<reference key="4">
    <citation type="journal article" date="2004" name="J. Agric. Food Chem.">
        <title>Determining the biosynthetic sequence in the early steps of the fumonisin pathway by use of three gene-disruption mutants of Fusarium verticillioides.</title>
        <authorList>
            <person name="Bojja R.S."/>
            <person name="Cerny R.L."/>
            <person name="Proctor R.H."/>
            <person name="Du L."/>
        </authorList>
    </citation>
    <scope>FUNCTION</scope>
    <scope>DISRUPTION PHENOTYPE</scope>
    <scope>PATHWAY</scope>
</reference>
<reference key="5">
    <citation type="journal article" date="2007" name="Eukaryot. Cell">
        <title>The Fusarium verticillioides FUM gene cluster encodes a Zn(II)2Cys6 protein that affects FUM gene expression and fumonisin production.</title>
        <authorList>
            <person name="Brown D.W."/>
            <person name="Butchko R.A."/>
            <person name="Busman M."/>
            <person name="Proctor R.H."/>
        </authorList>
    </citation>
    <scope>INDUCTION</scope>
    <source>
        <strain>M3125 / FGSC 7600</strain>
    </source>
</reference>
<reference key="6">
    <citation type="journal article" date="2020" name="MBio">
        <title>Self-Protection against the Sphingolipid Biosynthesis Inhibitor Fumonisin B1 Is Conferred by a FUM Cluster-Encoded Ceramide Synthase.</title>
        <authorList>
            <person name="Janevska S."/>
            <person name="Ferling I."/>
            <person name="Jojic K."/>
            <person name="Rautschek J."/>
            <person name="Hoefgen S."/>
            <person name="Proctor R.H."/>
            <person name="Hillmann F."/>
            <person name="Valiante V."/>
        </authorList>
    </citation>
    <scope>SUBCELLULAR LOCATION</scope>
    <scope>INDUCTION BY FUMONISIN B1</scope>
</reference>
<gene>
    <name evidence="9" type="primary">FUM8</name>
    <name type="ORF">FVEG_14634</name>
</gene>
<name>FUM8_GIBM7</name>